<protein>
    <recommendedName>
        <fullName>Integrator complex subunit 9</fullName>
        <shortName>Int9</shortName>
    </recommendedName>
</protein>
<dbReference type="EMBL" id="BC105437">
    <property type="protein sequence ID" value="AAI05438.1"/>
    <property type="molecule type" value="mRNA"/>
</dbReference>
<dbReference type="RefSeq" id="NP_001039828.1">
    <property type="nucleotide sequence ID" value="NM_001046363.1"/>
</dbReference>
<dbReference type="SMR" id="Q2KJA6"/>
<dbReference type="FunCoup" id="Q2KJA6">
    <property type="interactions" value="4464"/>
</dbReference>
<dbReference type="STRING" id="9913.ENSBTAP00000046018"/>
<dbReference type="PaxDb" id="9913-ENSBTAP00000046018"/>
<dbReference type="GeneID" id="533964"/>
<dbReference type="KEGG" id="bta:533964"/>
<dbReference type="CTD" id="55756"/>
<dbReference type="eggNOG" id="KOG1138">
    <property type="taxonomic scope" value="Eukaryota"/>
</dbReference>
<dbReference type="InParanoid" id="Q2KJA6"/>
<dbReference type="OrthoDB" id="5600060at2759"/>
<dbReference type="Proteomes" id="UP000009136">
    <property type="component" value="Unplaced"/>
</dbReference>
<dbReference type="GO" id="GO:0005737">
    <property type="term" value="C:cytoplasm"/>
    <property type="evidence" value="ECO:0000250"/>
    <property type="project" value="UniProtKB"/>
</dbReference>
<dbReference type="GO" id="GO:0160232">
    <property type="term" value="C:INTAC complex"/>
    <property type="evidence" value="ECO:0000250"/>
    <property type="project" value="UniProtKB"/>
</dbReference>
<dbReference type="GO" id="GO:0032039">
    <property type="term" value="C:integrator complex"/>
    <property type="evidence" value="ECO:0000250"/>
    <property type="project" value="UniProtKB"/>
</dbReference>
<dbReference type="GO" id="GO:0005634">
    <property type="term" value="C:nucleus"/>
    <property type="evidence" value="ECO:0000250"/>
    <property type="project" value="UniProtKB"/>
</dbReference>
<dbReference type="GO" id="GO:0160240">
    <property type="term" value="P:RNA polymerase II transcription initiation surveillance"/>
    <property type="evidence" value="ECO:0000250"/>
    <property type="project" value="UniProtKB"/>
</dbReference>
<dbReference type="GO" id="GO:0034472">
    <property type="term" value="P:snRNA 3'-end processing"/>
    <property type="evidence" value="ECO:0000250"/>
    <property type="project" value="UniProtKB"/>
</dbReference>
<dbReference type="CDD" id="cd16294">
    <property type="entry name" value="Int9-like_MBL-fold"/>
    <property type="match status" value="1"/>
</dbReference>
<dbReference type="FunFam" id="3.40.50.10890:FF:000003">
    <property type="entry name" value="Integrator complex subunit 9"/>
    <property type="match status" value="1"/>
</dbReference>
<dbReference type="Gene3D" id="3.40.50.10890">
    <property type="match status" value="1"/>
</dbReference>
<dbReference type="Gene3D" id="3.60.15.10">
    <property type="entry name" value="Ribonuclease Z/Hydroxyacylglutathione hydrolase-like"/>
    <property type="match status" value="1"/>
</dbReference>
<dbReference type="InterPro" id="IPR022712">
    <property type="entry name" value="Beta_Casp"/>
</dbReference>
<dbReference type="InterPro" id="IPR027074">
    <property type="entry name" value="Integrator_9su"/>
</dbReference>
<dbReference type="InterPro" id="IPR048660">
    <property type="entry name" value="IntS9-like_C"/>
</dbReference>
<dbReference type="InterPro" id="IPR001279">
    <property type="entry name" value="Metallo-B-lactamas"/>
</dbReference>
<dbReference type="InterPro" id="IPR036866">
    <property type="entry name" value="RibonucZ/Hydroxyglut_hydro"/>
</dbReference>
<dbReference type="PANTHER" id="PTHR46094">
    <property type="entry name" value="INTEGRATOR COMPLEX SUBUNIT 9"/>
    <property type="match status" value="1"/>
</dbReference>
<dbReference type="PANTHER" id="PTHR46094:SF1">
    <property type="entry name" value="INTEGRATOR COMPLEX SUBUNIT 9"/>
    <property type="match status" value="1"/>
</dbReference>
<dbReference type="Pfam" id="PF10996">
    <property type="entry name" value="Beta-Casp"/>
    <property type="match status" value="1"/>
</dbReference>
<dbReference type="Pfam" id="PF21382">
    <property type="entry name" value="IntS9_C"/>
    <property type="match status" value="1"/>
</dbReference>
<dbReference type="Pfam" id="PF16661">
    <property type="entry name" value="Lactamase_B_6"/>
    <property type="match status" value="1"/>
</dbReference>
<dbReference type="SMART" id="SM01027">
    <property type="entry name" value="Beta-Casp"/>
    <property type="match status" value="1"/>
</dbReference>
<dbReference type="SUPFAM" id="SSF56281">
    <property type="entry name" value="Metallo-hydrolase/oxidoreductase"/>
    <property type="match status" value="1"/>
</dbReference>
<feature type="chain" id="PRO_0000259556" description="Integrator complex subunit 9">
    <location>
        <begin position="1"/>
        <end position="658"/>
    </location>
</feature>
<feature type="region of interest" description="Disordered" evidence="3">
    <location>
        <begin position="548"/>
        <end position="573"/>
    </location>
</feature>
<feature type="short sequence motif" description="Nuclear localization signal" evidence="2">
    <location>
        <begin position="566"/>
        <end position="570"/>
    </location>
</feature>
<feature type="cross-link" description="Glycyl lysine isopeptide (Lys-Gly) (interchain with G-Cter in SUMO2)" evidence="2">
    <location>
        <position position="58"/>
    </location>
</feature>
<sequence length="658" mass="73837">MKLYCLSGHPTLPCNVLKFKSTTIMLDCGLDMTSTLNFLPLPLVQSPRLSNLPGWSLKDGNAFLDKELKECSGHVFVDSVPEFCLPETELIDLSTVDVILISNYHCMMALPYITEHTGFTGTVYATEPTVQIGRLLMEELVNFIERVPKAQSASLWKNKDIQRLLPSPLKDAVEVSTWRRCYTMQEVNSALSKIQLVGYSQKIELFGAVQVTPLSSGYALGSSNWIIQSHYEKVSYVSGSSLLTTHPQPMDQASLKNSDVLILTGLTQIPTANPDSMVGEFCSNLALTVRNGGNVLVPCYPSGVIYDLLECLYQYIDSAGLSSIPFYFISPVANSSLEFSQIFAEWLCHNKQTKVYLPEPPFPHAELIQTNKLKHYPSIHGDFSNDFRQPCVVFTGHPSLRFGDVVHFMELWGKSSLNTVIFTEPDFSYLEALAPYQPLAMKCIYCPIDTRLNFIQVSKLLKEVQPLHVVCPEQYTQPTPAQSHRMDLMVDCQPPAMSYRRAEVLALPFKRRYEKIEIMPELADSLVPMEIKPGISLATVSAVLHTKDNKHVLQPPPRPTQPTGGKKRKRASDDIPDCKVLKPLLSGSIPVDQFVQTLEKHGFSDIKVEDTAKGHIVLLQEAETLIQIEEDSTHIICDDDEVLRVRLRDLVLKFLQKF</sequence>
<accession>Q2KJA6</accession>
<reference key="1">
    <citation type="submission" date="2005-09" db="EMBL/GenBank/DDBJ databases">
        <authorList>
            <consortium name="NIH - Mammalian Gene Collection (MGC) project"/>
        </authorList>
    </citation>
    <scope>NUCLEOTIDE SEQUENCE [LARGE SCALE MRNA]</scope>
    <source>
        <strain>Hereford</strain>
        <tissue>Thymus</tissue>
    </source>
</reference>
<keyword id="KW-0963">Cytoplasm</keyword>
<keyword id="KW-1017">Isopeptide bond</keyword>
<keyword id="KW-0539">Nucleus</keyword>
<keyword id="KW-1185">Reference proteome</keyword>
<keyword id="KW-0832">Ubl conjugation</keyword>
<proteinExistence type="evidence at transcript level"/>
<evidence type="ECO:0000250" key="1">
    <source>
        <dbReference type="UniProtKB" id="Q8K114"/>
    </source>
</evidence>
<evidence type="ECO:0000250" key="2">
    <source>
        <dbReference type="UniProtKB" id="Q9NV88"/>
    </source>
</evidence>
<evidence type="ECO:0000256" key="3">
    <source>
        <dbReference type="SAM" id="MobiDB-lite"/>
    </source>
</evidence>
<evidence type="ECO:0000305" key="4"/>
<gene>
    <name type="primary">INTS9</name>
</gene>
<organism>
    <name type="scientific">Bos taurus</name>
    <name type="common">Bovine</name>
    <dbReference type="NCBI Taxonomy" id="9913"/>
    <lineage>
        <taxon>Eukaryota</taxon>
        <taxon>Metazoa</taxon>
        <taxon>Chordata</taxon>
        <taxon>Craniata</taxon>
        <taxon>Vertebrata</taxon>
        <taxon>Euteleostomi</taxon>
        <taxon>Mammalia</taxon>
        <taxon>Eutheria</taxon>
        <taxon>Laurasiatheria</taxon>
        <taxon>Artiodactyla</taxon>
        <taxon>Ruminantia</taxon>
        <taxon>Pecora</taxon>
        <taxon>Bovidae</taxon>
        <taxon>Bovinae</taxon>
        <taxon>Bos</taxon>
    </lineage>
</organism>
<name>INT9_BOVIN</name>
<comment type="function">
    <text evidence="2">Component of the integrator complex, a multiprotein complex that terminates RNA polymerase II (Pol II) transcription in the promoter-proximal region of genes. The integrator complex provides a quality checkpoint during transcription elongation by driving premature transcription termination of transcripts that are unfavorably configured for transcriptional elongation: the complex terminates transcription by (1) catalyzing dephosphorylation of the C-terminal domain (CTD) of Pol II subunit POLR2A/RPB1 and SUPT5H/SPT5, (2) degrading the exiting nascent RNA transcript via endonuclease activity and (3) promoting the release of Pol II from bound DNA. The integrator complex is also involved in terminating the synthesis of non-coding Pol II transcripts, such as enhancer RNAs (eRNAs), small nuclear RNAs (snRNAs), telomerase RNAs and long non-coding RNAs (lncRNAs). Mediates recruitment of cytoplasmic dynein to the nuclear envelope, probably as component of the integrator complex.</text>
</comment>
<comment type="subunit">
    <text evidence="1 2">Component of the Integrator complex, composed of core subunits INTS1, INTS2, INTS3, INTS4, INTS5, INTS6, INTS7, INTS8, INTS9/RC74, INTS10, INTS11/CPSF3L, INTS12, INTS13, INTS14 and INTS15. The core complex associates with protein phosphatase 2A subunits PPP2CA and PPP2R1A, to form the Integrator-PP2A (INTAC) complex. INTS9 is part of the RNA endonuclease subcomplex, composed of INTS4, INTS9, INTS11 and inositol hexakisphosphate (InsP6). Interacts with WDR73; interaction is required for the assembly of the RNA endonuclease subcomplex in the cytoplasm. Interacts with BRAT1; interaction is required for the assembly of the RNA endonuclease subcomplex (By similarity). Interacts with ESRRB, ESRRB is not a core component of the Integrator complex and this association is a bridge for the interaction with the multiprotein complex Integrator; attracts the transcriptional machinery (By similarity).</text>
</comment>
<comment type="subcellular location">
    <subcellularLocation>
        <location evidence="2">Nucleus</location>
    </subcellularLocation>
    <subcellularLocation>
        <location evidence="2">Cytoplasm</location>
    </subcellularLocation>
</comment>
<comment type="miscellaneous">
    <text>Although strongly related to RNA-specific endonuclease proteins, it lacks the HXHXDH motif that binds zinc and participates in the catalytic center. Its function as endonuclease is therefore unsure.</text>
</comment>
<comment type="similarity">
    <text evidence="4">Belongs to the metallo-beta-lactamase superfamily. RNA-metabolizing metallo-beta-lactamase-like family. INTS9 subfamily.</text>
</comment>